<reference key="1">
    <citation type="submission" date="2008-02" db="EMBL/GenBank/DDBJ databases">
        <title>Complete sequence of Haemophilus somnus 2336.</title>
        <authorList>
            <consortium name="US DOE Joint Genome Institute"/>
            <person name="Siddaramappa S."/>
            <person name="Duncan A.J."/>
            <person name="Challacombe J.F."/>
            <person name="Rainey D."/>
            <person name="Gillaspy A.F."/>
            <person name="Carson M."/>
            <person name="Gipson J."/>
            <person name="Gipson M."/>
            <person name="Bruce D."/>
            <person name="Detter J.C."/>
            <person name="Han C.S."/>
            <person name="Land M."/>
            <person name="Tapia R."/>
            <person name="Thompson L.S."/>
            <person name="Orvis J."/>
            <person name="Zaitshik J."/>
            <person name="Barnes G."/>
            <person name="Brettin T.S."/>
            <person name="Dyer D.W."/>
            <person name="Inzana T.J."/>
        </authorList>
    </citation>
    <scope>NUCLEOTIDE SEQUENCE [LARGE SCALE GENOMIC DNA]</scope>
    <source>
        <strain>2336</strain>
    </source>
</reference>
<name>RNPH_HISS2</name>
<feature type="chain" id="PRO_1000082294" description="Ribonuclease PH">
    <location>
        <begin position="1"/>
        <end position="238"/>
    </location>
</feature>
<feature type="binding site" evidence="1">
    <location>
        <position position="86"/>
    </location>
    <ligand>
        <name>phosphate</name>
        <dbReference type="ChEBI" id="CHEBI:43474"/>
        <note>substrate</note>
    </ligand>
</feature>
<feature type="binding site" evidence="1">
    <location>
        <begin position="124"/>
        <end position="126"/>
    </location>
    <ligand>
        <name>phosphate</name>
        <dbReference type="ChEBI" id="CHEBI:43474"/>
        <note>substrate</note>
    </ligand>
</feature>
<evidence type="ECO:0000255" key="1">
    <source>
        <dbReference type="HAMAP-Rule" id="MF_00564"/>
    </source>
</evidence>
<organism>
    <name type="scientific">Histophilus somni (strain 2336)</name>
    <name type="common">Haemophilus somnus</name>
    <dbReference type="NCBI Taxonomy" id="228400"/>
    <lineage>
        <taxon>Bacteria</taxon>
        <taxon>Pseudomonadati</taxon>
        <taxon>Pseudomonadota</taxon>
        <taxon>Gammaproteobacteria</taxon>
        <taxon>Pasteurellales</taxon>
        <taxon>Pasteurellaceae</taxon>
        <taxon>Histophilus</taxon>
    </lineage>
</organism>
<proteinExistence type="inferred from homology"/>
<accession>B0UWM2</accession>
<dbReference type="EC" id="2.7.7.56" evidence="1"/>
<dbReference type="EMBL" id="CP000947">
    <property type="protein sequence ID" value="ACA31959.1"/>
    <property type="molecule type" value="Genomic_DNA"/>
</dbReference>
<dbReference type="RefSeq" id="WP_012341187.1">
    <property type="nucleotide sequence ID" value="NC_010519.1"/>
</dbReference>
<dbReference type="SMR" id="B0UWM2"/>
<dbReference type="STRING" id="228400.HSM_0326"/>
<dbReference type="GeneID" id="31486606"/>
<dbReference type="KEGG" id="hsm:HSM_0326"/>
<dbReference type="HOGENOM" id="CLU_050858_0_0_6"/>
<dbReference type="GO" id="GO:0000175">
    <property type="term" value="F:3'-5'-RNA exonuclease activity"/>
    <property type="evidence" value="ECO:0007669"/>
    <property type="project" value="UniProtKB-UniRule"/>
</dbReference>
<dbReference type="GO" id="GO:0000049">
    <property type="term" value="F:tRNA binding"/>
    <property type="evidence" value="ECO:0007669"/>
    <property type="project" value="UniProtKB-UniRule"/>
</dbReference>
<dbReference type="GO" id="GO:0009022">
    <property type="term" value="F:tRNA nucleotidyltransferase activity"/>
    <property type="evidence" value="ECO:0007669"/>
    <property type="project" value="UniProtKB-UniRule"/>
</dbReference>
<dbReference type="GO" id="GO:0016075">
    <property type="term" value="P:rRNA catabolic process"/>
    <property type="evidence" value="ECO:0007669"/>
    <property type="project" value="UniProtKB-UniRule"/>
</dbReference>
<dbReference type="GO" id="GO:0006364">
    <property type="term" value="P:rRNA processing"/>
    <property type="evidence" value="ECO:0007669"/>
    <property type="project" value="UniProtKB-KW"/>
</dbReference>
<dbReference type="GO" id="GO:0008033">
    <property type="term" value="P:tRNA processing"/>
    <property type="evidence" value="ECO:0007669"/>
    <property type="project" value="UniProtKB-UniRule"/>
</dbReference>
<dbReference type="CDD" id="cd11362">
    <property type="entry name" value="RNase_PH_bact"/>
    <property type="match status" value="1"/>
</dbReference>
<dbReference type="FunFam" id="3.30.230.70:FF:000003">
    <property type="entry name" value="Ribonuclease PH"/>
    <property type="match status" value="1"/>
</dbReference>
<dbReference type="Gene3D" id="3.30.230.70">
    <property type="entry name" value="GHMP Kinase, N-terminal domain"/>
    <property type="match status" value="1"/>
</dbReference>
<dbReference type="HAMAP" id="MF_00564">
    <property type="entry name" value="RNase_PH"/>
    <property type="match status" value="1"/>
</dbReference>
<dbReference type="InterPro" id="IPR001247">
    <property type="entry name" value="ExoRNase_PH_dom1"/>
</dbReference>
<dbReference type="InterPro" id="IPR015847">
    <property type="entry name" value="ExoRNase_PH_dom2"/>
</dbReference>
<dbReference type="InterPro" id="IPR036345">
    <property type="entry name" value="ExoRNase_PH_dom2_sf"/>
</dbReference>
<dbReference type="InterPro" id="IPR027408">
    <property type="entry name" value="PNPase/RNase_PH_dom_sf"/>
</dbReference>
<dbReference type="InterPro" id="IPR020568">
    <property type="entry name" value="Ribosomal_Su5_D2-typ_SF"/>
</dbReference>
<dbReference type="InterPro" id="IPR050080">
    <property type="entry name" value="RNase_PH"/>
</dbReference>
<dbReference type="InterPro" id="IPR002381">
    <property type="entry name" value="RNase_PH_bac-type"/>
</dbReference>
<dbReference type="InterPro" id="IPR018336">
    <property type="entry name" value="RNase_PH_CS"/>
</dbReference>
<dbReference type="NCBIfam" id="TIGR01966">
    <property type="entry name" value="RNasePH"/>
    <property type="match status" value="1"/>
</dbReference>
<dbReference type="PANTHER" id="PTHR11953">
    <property type="entry name" value="EXOSOME COMPLEX COMPONENT"/>
    <property type="match status" value="1"/>
</dbReference>
<dbReference type="PANTHER" id="PTHR11953:SF0">
    <property type="entry name" value="EXOSOME COMPLEX COMPONENT RRP41"/>
    <property type="match status" value="1"/>
</dbReference>
<dbReference type="Pfam" id="PF01138">
    <property type="entry name" value="RNase_PH"/>
    <property type="match status" value="1"/>
</dbReference>
<dbReference type="Pfam" id="PF03725">
    <property type="entry name" value="RNase_PH_C"/>
    <property type="match status" value="1"/>
</dbReference>
<dbReference type="SUPFAM" id="SSF55666">
    <property type="entry name" value="Ribonuclease PH domain 2-like"/>
    <property type="match status" value="1"/>
</dbReference>
<dbReference type="SUPFAM" id="SSF54211">
    <property type="entry name" value="Ribosomal protein S5 domain 2-like"/>
    <property type="match status" value="1"/>
</dbReference>
<dbReference type="PROSITE" id="PS01277">
    <property type="entry name" value="RIBONUCLEASE_PH"/>
    <property type="match status" value="1"/>
</dbReference>
<comment type="function">
    <text evidence="1">Phosphorolytic 3'-5' exoribonuclease that plays an important role in tRNA 3'-end maturation. Removes nucleotide residues following the 3'-CCA terminus of tRNAs; can also add nucleotides to the ends of RNA molecules by using nucleoside diphosphates as substrates, but this may not be physiologically important. Probably plays a role in initiation of 16S rRNA degradation (leading to ribosome degradation) during starvation.</text>
</comment>
<comment type="catalytic activity">
    <reaction evidence="1">
        <text>tRNA(n+1) + phosphate = tRNA(n) + a ribonucleoside 5'-diphosphate</text>
        <dbReference type="Rhea" id="RHEA:10628"/>
        <dbReference type="Rhea" id="RHEA-COMP:17343"/>
        <dbReference type="Rhea" id="RHEA-COMP:17344"/>
        <dbReference type="ChEBI" id="CHEBI:43474"/>
        <dbReference type="ChEBI" id="CHEBI:57930"/>
        <dbReference type="ChEBI" id="CHEBI:173114"/>
        <dbReference type="EC" id="2.7.7.56"/>
    </reaction>
</comment>
<comment type="subunit">
    <text evidence="1">Homohexameric ring arranged as a trimer of dimers.</text>
</comment>
<comment type="similarity">
    <text evidence="1">Belongs to the RNase PH family.</text>
</comment>
<protein>
    <recommendedName>
        <fullName evidence="1">Ribonuclease PH</fullName>
        <shortName evidence="1">RNase PH</shortName>
        <ecNumber evidence="1">2.7.7.56</ecNumber>
    </recommendedName>
    <alternativeName>
        <fullName evidence="1">tRNA nucleotidyltransferase</fullName>
    </alternativeName>
</protein>
<sequence>MRPNARAINQPRPIKITRHYTKHAEGSVLVEFGETKVICTATVEDSVPRFLKGQGKGWVTAEYGMLPRSTHSRMQREAAKGKQGGRTMEIQRLIARSLRAMVDLEALGERAITLDCDVIQADGGTRTASITGACVALIDAINFLLQNGTLTTNPIKGLVAAISVGIVNGETVCDLEYVEDSIAETDMNVVMMEDGRMIEVQGTAEGEPFSHAELLTLLDLAKQGCEQLFVAQRVALAE</sequence>
<gene>
    <name evidence="1" type="primary">rph</name>
    <name type="ordered locus">HSM_0326</name>
</gene>
<keyword id="KW-0548">Nucleotidyltransferase</keyword>
<keyword id="KW-0694">RNA-binding</keyword>
<keyword id="KW-0698">rRNA processing</keyword>
<keyword id="KW-0808">Transferase</keyword>
<keyword id="KW-0819">tRNA processing</keyword>
<keyword id="KW-0820">tRNA-binding</keyword>